<comment type="function">
    <text evidence="1">Involved in nonsense-mediated decay (NMD) of mRNAs containing premature stop codons. Probable component of kinase complex containing nonC and recruited to stalled ribosomes (By similarity).</text>
</comment>
<comment type="similarity">
    <text evidence="4">Belongs to the SMG8 family.</text>
</comment>
<organism>
    <name type="scientific">Drosophila pseudoobscura pseudoobscura</name>
    <name type="common">Fruit fly</name>
    <dbReference type="NCBI Taxonomy" id="46245"/>
    <lineage>
        <taxon>Eukaryota</taxon>
        <taxon>Metazoa</taxon>
        <taxon>Ecdysozoa</taxon>
        <taxon>Arthropoda</taxon>
        <taxon>Hexapoda</taxon>
        <taxon>Insecta</taxon>
        <taxon>Pterygota</taxon>
        <taxon>Neoptera</taxon>
        <taxon>Endopterygota</taxon>
        <taxon>Diptera</taxon>
        <taxon>Brachycera</taxon>
        <taxon>Muscomorpha</taxon>
        <taxon>Ephydroidea</taxon>
        <taxon>Drosophilidae</taxon>
        <taxon>Drosophila</taxon>
        <taxon>Sophophora</taxon>
    </lineage>
</organism>
<accession>B5E0H4</accession>
<evidence type="ECO:0000250" key="1"/>
<evidence type="ECO:0000250" key="2">
    <source>
        <dbReference type="UniProtKB" id="Q8ND04"/>
    </source>
</evidence>
<evidence type="ECO:0000256" key="3">
    <source>
        <dbReference type="SAM" id="MobiDB-lite"/>
    </source>
</evidence>
<evidence type="ECO:0000305" key="4"/>
<feature type="chain" id="PRO_0000378177" description="Nonsense-mediated mRNA decay factor SMG8">
    <location>
        <begin position="1"/>
        <end position="953"/>
    </location>
</feature>
<feature type="region of interest" description="Disordered" evidence="3">
    <location>
        <begin position="571"/>
        <end position="604"/>
    </location>
</feature>
<feature type="region of interest" description="Disordered" evidence="3">
    <location>
        <begin position="629"/>
        <end position="653"/>
    </location>
</feature>
<feature type="compositionally biased region" description="Acidic residues" evidence="3">
    <location>
        <begin position="573"/>
        <end position="586"/>
    </location>
</feature>
<feature type="compositionally biased region" description="Polar residues" evidence="3">
    <location>
        <begin position="595"/>
        <end position="604"/>
    </location>
</feature>
<feature type="compositionally biased region" description="Low complexity" evidence="3">
    <location>
        <begin position="634"/>
        <end position="653"/>
    </location>
</feature>
<gene>
    <name type="ORF">GA24994</name>
</gene>
<sequence length="953" mass="108360">MGLKDYYTWKFPNIPEHVAQELDQLGRSLVVVGVIGRSRCVLANKMRAFGMEPPVDHEPTDGQLQCYYKPGTSTLLLHFETTFDDAILGQQIDETMEQDGAPFDFDGFYERMKCRFVRMMLLALHVCHILVYVETGQTFDLSLVTIFQLMKFGREHHLIQFLPSLLKETPAGRLLGEKCRLCTPRILFLFENFTQEEGKTRECVSACEFQTEDSIYELLRHHQIITNSSSSSLLALPNNKQFVFYNAHDQLHADRLLQSIEFLNLDMRKVDVKEEDDDLEVLELAPFNGFVKSFGESFENTNYEEQQYKTEHTAWHFLQRHVQDALLGCFDEGSFKQVPQRGQLQLLNAQEWHDCIAELHKLLVSSAGTQESLNEIRNEDYQVFLQSFDESLNYEKKFWAHLCEIGLKMGIEAYKKAAPAIYGSSMHQQLLAEATLAFEEEGRGPPAEASIAKMTATCLRHWQDGRQQCEQLSLRSQPCTQPKEMPHDKHNSGVIHVSSCNCGRTQGRREDPFSLRQANYEFYEHMVKMCNLCVKVKQFKFPIFEPTNNEYRAAAFEVAFPLLHAGKNRLAEDAELDPDEEDEELPTGEREEQHITQSNGCSQPLSPTFGSDLNMSIAGFGVSLNESEPCFDQSSSSEAESTCSGTSSEESNTELVLQLKEPAKKHEESCDPDSIAPLPSMCLTSTTEYLPGLVHTLSKVGLLPLFPSWSLACVGPSSIYSHNTGLQEHFQSGFLSGANFLLPWDVQLRLVHATKHYHNSHQPHMSKKQQRYRKHGDRMVLKIFVGFEYECSRGHRFMMCRPDRVLRGGADIERDTCSKMVHTNMPLYYPCPCRSQNNYLAQLMRIHVVTPKAPVNIIVDPKVCMGKDKYTFTLGSMVPPRLSQSAYWILRLPYVYQGDDALIAPPEKLEPDDIMAGGYLLAGMFGIAETDPTLDLNDQGHLDTNELGTFTRI</sequence>
<proteinExistence type="inferred from homology"/>
<reference key="1">
    <citation type="journal article" date="2005" name="Genome Res.">
        <title>Comparative genome sequencing of Drosophila pseudoobscura: chromosomal, gene, and cis-element evolution.</title>
        <authorList>
            <person name="Richards S."/>
            <person name="Liu Y."/>
            <person name="Bettencourt B.R."/>
            <person name="Hradecky P."/>
            <person name="Letovsky S."/>
            <person name="Nielsen R."/>
            <person name="Thornton K."/>
            <person name="Hubisz M.J."/>
            <person name="Chen R."/>
            <person name="Meisel R.P."/>
            <person name="Couronne O."/>
            <person name="Hua S."/>
            <person name="Smith M.A."/>
            <person name="Zhang P."/>
            <person name="Liu J."/>
            <person name="Bussemaker H.J."/>
            <person name="van Batenburg M.F."/>
            <person name="Howells S.L."/>
            <person name="Scherer S.E."/>
            <person name="Sodergren E."/>
            <person name="Matthews B.B."/>
            <person name="Crosby M.A."/>
            <person name="Schroeder A.J."/>
            <person name="Ortiz-Barrientos D."/>
            <person name="Rives C.M."/>
            <person name="Metzker M.L."/>
            <person name="Muzny D.M."/>
            <person name="Scott G."/>
            <person name="Steffen D."/>
            <person name="Wheeler D.A."/>
            <person name="Worley K.C."/>
            <person name="Havlak P."/>
            <person name="Durbin K.J."/>
            <person name="Egan A."/>
            <person name="Gill R."/>
            <person name="Hume J."/>
            <person name="Morgan M.B."/>
            <person name="Miner G."/>
            <person name="Hamilton C."/>
            <person name="Huang Y."/>
            <person name="Waldron L."/>
            <person name="Verduzco D."/>
            <person name="Clerc-Blankenburg K.P."/>
            <person name="Dubchak I."/>
            <person name="Noor M.A.F."/>
            <person name="Anderson W."/>
            <person name="White K.P."/>
            <person name="Clark A.G."/>
            <person name="Schaeffer S.W."/>
            <person name="Gelbart W.M."/>
            <person name="Weinstock G.M."/>
            <person name="Gibbs R.A."/>
        </authorList>
    </citation>
    <scope>NUCLEOTIDE SEQUENCE [LARGE SCALE GENOMIC DNA]</scope>
    <source>
        <strain>MV2-25 / Tucson 14011-0121.94</strain>
    </source>
</reference>
<dbReference type="EMBL" id="CM000071">
    <property type="protein sequence ID" value="EDY69345.1"/>
    <property type="molecule type" value="Genomic_DNA"/>
</dbReference>
<dbReference type="RefSeq" id="XP_002138787.1">
    <property type="nucleotide sequence ID" value="XM_002138751.2"/>
</dbReference>
<dbReference type="SMR" id="B5E0H4"/>
<dbReference type="FunCoup" id="B5E0H4">
    <property type="interactions" value="2955"/>
</dbReference>
<dbReference type="STRING" id="46245.B5E0H4"/>
<dbReference type="EnsemblMetazoa" id="FBtr0280015">
    <property type="protein sequence ID" value="FBpp0278453"/>
    <property type="gene ID" value="FBgn0246377"/>
</dbReference>
<dbReference type="KEGG" id="dpo:6898813"/>
<dbReference type="eggNOG" id="KOG3692">
    <property type="taxonomic scope" value="Eukaryota"/>
</dbReference>
<dbReference type="HOGENOM" id="CLU_008116_0_0_1"/>
<dbReference type="InParanoid" id="B5E0H4"/>
<dbReference type="OMA" id="HVCHIVV"/>
<dbReference type="Proteomes" id="UP000001819">
    <property type="component" value="Chromosome 3"/>
</dbReference>
<dbReference type="Bgee" id="FBgn0246377">
    <property type="expression patterns" value="Expressed in female reproductive system and 2 other cell types or tissues"/>
</dbReference>
<dbReference type="ExpressionAtlas" id="B5E0H4">
    <property type="expression patterns" value="baseline"/>
</dbReference>
<dbReference type="GO" id="GO:0000184">
    <property type="term" value="P:nuclear-transcribed mRNA catabolic process, nonsense-mediated decay"/>
    <property type="evidence" value="ECO:0000250"/>
    <property type="project" value="UniProtKB"/>
</dbReference>
<dbReference type="InterPro" id="IPR019354">
    <property type="entry name" value="SMG8-like"/>
</dbReference>
<dbReference type="PANTHER" id="PTHR13091">
    <property type="entry name" value="AMPLIFIED IN BREAST CANCER 2-RELATED"/>
    <property type="match status" value="1"/>
</dbReference>
<dbReference type="PANTHER" id="PTHR13091:SF0">
    <property type="entry name" value="NONSENSE-MEDIATED MRNA DECAY FACTOR SMG8"/>
    <property type="match status" value="1"/>
</dbReference>
<dbReference type="Pfam" id="PF10220">
    <property type="entry name" value="Smg8_Smg9"/>
    <property type="match status" value="1"/>
</dbReference>
<keyword id="KW-0866">Nonsense-mediated mRNA decay</keyword>
<keyword id="KW-1185">Reference proteome</keyword>
<name>SMG8_DROPS</name>
<protein>
    <recommendedName>
        <fullName evidence="2">Nonsense-mediated mRNA decay factor SMG8</fullName>
    </recommendedName>
    <alternativeName>
        <fullName>Protein smg-8 homolog</fullName>
    </alternativeName>
</protein>